<feature type="chain" id="PRO_0000348920" description="Trehalose-6-phosphate synthase">
    <location>
        <begin position="1"/>
        <end position="474"/>
    </location>
</feature>
<feature type="binding site" evidence="1">
    <location>
        <position position="10"/>
    </location>
    <ligand>
        <name>D-glucose 6-phosphate</name>
        <dbReference type="ChEBI" id="CHEBI:61548"/>
    </ligand>
</feature>
<feature type="binding site" evidence="1">
    <location>
        <begin position="22"/>
        <end position="23"/>
    </location>
    <ligand>
        <name>UDP-alpha-D-glucose</name>
        <dbReference type="ChEBI" id="CHEBI:58885"/>
    </ligand>
</feature>
<feature type="binding site" evidence="1">
    <location>
        <position position="77"/>
    </location>
    <ligand>
        <name>D-glucose 6-phosphate</name>
        <dbReference type="ChEBI" id="CHEBI:61548"/>
    </ligand>
</feature>
<feature type="binding site" evidence="1">
    <location>
        <position position="131"/>
    </location>
    <ligand>
        <name>D-glucose 6-phosphate</name>
        <dbReference type="ChEBI" id="CHEBI:61548"/>
    </ligand>
</feature>
<feature type="binding site" evidence="1">
    <location>
        <position position="263"/>
    </location>
    <ligand>
        <name>UDP-alpha-D-glucose</name>
        <dbReference type="ChEBI" id="CHEBI:58885"/>
    </ligand>
</feature>
<feature type="binding site" evidence="1">
    <location>
        <position position="268"/>
    </location>
    <ligand>
        <name>UDP-alpha-D-glucose</name>
        <dbReference type="ChEBI" id="CHEBI:58885"/>
    </ligand>
</feature>
<feature type="binding site" evidence="1">
    <location>
        <position position="301"/>
    </location>
    <ligand>
        <name>D-glucose 6-phosphate</name>
        <dbReference type="ChEBI" id="CHEBI:61548"/>
    </ligand>
</feature>
<feature type="binding site" evidence="1">
    <location>
        <position position="340"/>
    </location>
    <ligand>
        <name>UDP-alpha-D-glucose</name>
        <dbReference type="ChEBI" id="CHEBI:58885"/>
    </ligand>
</feature>
<feature type="binding site" evidence="1">
    <location>
        <begin position="366"/>
        <end position="370"/>
    </location>
    <ligand>
        <name>UDP-alpha-D-glucose</name>
        <dbReference type="ChEBI" id="CHEBI:58885"/>
    </ligand>
</feature>
<feature type="site" description="Involved in alpha anomer selectivity" evidence="1">
    <location>
        <position position="86"/>
    </location>
</feature>
<feature type="site" description="Involved in alpha anomer selectivity" evidence="1">
    <location>
        <position position="156"/>
    </location>
</feature>
<evidence type="ECO:0000250" key="1">
    <source>
        <dbReference type="UniProtKB" id="P31677"/>
    </source>
</evidence>
<reference key="1">
    <citation type="journal article" date="2005" name="Nucleic Acids Res.">
        <title>Genome dynamics and diversity of Shigella species, the etiologic agents of bacillary dysentery.</title>
        <authorList>
            <person name="Yang F."/>
            <person name="Yang J."/>
            <person name="Zhang X."/>
            <person name="Chen L."/>
            <person name="Jiang Y."/>
            <person name="Yan Y."/>
            <person name="Tang X."/>
            <person name="Wang J."/>
            <person name="Xiong Z."/>
            <person name="Dong J."/>
            <person name="Xue Y."/>
            <person name="Zhu Y."/>
            <person name="Xu X."/>
            <person name="Sun L."/>
            <person name="Chen S."/>
            <person name="Nie H."/>
            <person name="Peng J."/>
            <person name="Xu J."/>
            <person name="Wang Y."/>
            <person name="Yuan Z."/>
            <person name="Wen Y."/>
            <person name="Yao Z."/>
            <person name="Shen Y."/>
            <person name="Qiang B."/>
            <person name="Hou Y."/>
            <person name="Yu J."/>
            <person name="Jin Q."/>
        </authorList>
    </citation>
    <scope>NUCLEOTIDE SEQUENCE [LARGE SCALE GENOMIC DNA]</scope>
    <source>
        <strain>Ss046</strain>
    </source>
</reference>
<comment type="function">
    <text evidence="1">Probably involved in the osmoprotection via the biosynthesis of trehalose. Catalyzes the transfer of glucose from UDP-alpha-D-glucose (UDP-Glc) to D-glucose 6-phosphate (Glc-6-P) to form trehalose-6-phosphate. Acts with retention of the anomeric configuration of the UDP-sugar donor.</text>
</comment>
<comment type="catalytic activity">
    <reaction evidence="1">
        <text>D-glucose 6-phosphate + UDP-alpha-D-glucose = alpha,alpha-trehalose 6-phosphate + UDP + H(+)</text>
        <dbReference type="Rhea" id="RHEA:18889"/>
        <dbReference type="ChEBI" id="CHEBI:15378"/>
        <dbReference type="ChEBI" id="CHEBI:58223"/>
        <dbReference type="ChEBI" id="CHEBI:58429"/>
        <dbReference type="ChEBI" id="CHEBI:58885"/>
        <dbReference type="ChEBI" id="CHEBI:61548"/>
        <dbReference type="EC" id="2.4.1.15"/>
    </reaction>
</comment>
<comment type="pathway">
    <text evidence="1">Glycan biosynthesis; trehalose biosynthesis.</text>
</comment>
<comment type="subunit">
    <text evidence="1">Homotetramer.</text>
</comment>
<comment type="similarity">
    <text evidence="1">Belongs to the glycosyltransferase 20 family.</text>
</comment>
<keyword id="KW-0328">Glycosyltransferase</keyword>
<keyword id="KW-1185">Reference proteome</keyword>
<keyword id="KW-0808">Transferase</keyword>
<organism>
    <name type="scientific">Shigella sonnei (strain Ss046)</name>
    <dbReference type="NCBI Taxonomy" id="300269"/>
    <lineage>
        <taxon>Bacteria</taxon>
        <taxon>Pseudomonadati</taxon>
        <taxon>Pseudomonadota</taxon>
        <taxon>Gammaproteobacteria</taxon>
        <taxon>Enterobacterales</taxon>
        <taxon>Enterobacteriaceae</taxon>
        <taxon>Shigella</taxon>
    </lineage>
</organism>
<dbReference type="EC" id="2.4.1.15" evidence="1"/>
<dbReference type="EMBL" id="CP000038">
    <property type="protein sequence ID" value="AAZ87938.1"/>
    <property type="molecule type" value="Genomic_DNA"/>
</dbReference>
<dbReference type="RefSeq" id="WP_001295646.1">
    <property type="nucleotide sequence ID" value="NC_007384.1"/>
</dbReference>
<dbReference type="SMR" id="Q3Z2S4"/>
<dbReference type="CAZy" id="GT20">
    <property type="family name" value="Glycosyltransferase Family 20"/>
</dbReference>
<dbReference type="GeneID" id="93776199"/>
<dbReference type="KEGG" id="ssn:SSON_1221"/>
<dbReference type="HOGENOM" id="CLU_002351_7_1_6"/>
<dbReference type="UniPathway" id="UPA00299"/>
<dbReference type="Proteomes" id="UP000002529">
    <property type="component" value="Chromosome"/>
</dbReference>
<dbReference type="GO" id="GO:0003825">
    <property type="term" value="F:alpha,alpha-trehalose-phosphate synthase (UDP-forming) activity"/>
    <property type="evidence" value="ECO:0007669"/>
    <property type="project" value="UniProtKB-EC"/>
</dbReference>
<dbReference type="GO" id="GO:0005992">
    <property type="term" value="P:trehalose biosynthetic process"/>
    <property type="evidence" value="ECO:0007669"/>
    <property type="project" value="UniProtKB-UniPathway"/>
</dbReference>
<dbReference type="CDD" id="cd03788">
    <property type="entry name" value="GT20_TPS"/>
    <property type="match status" value="1"/>
</dbReference>
<dbReference type="FunFam" id="3.40.50.2000:FF:000024">
    <property type="entry name" value="Trehalose-6-phosphate synthase"/>
    <property type="match status" value="1"/>
</dbReference>
<dbReference type="Gene3D" id="3.40.50.2000">
    <property type="entry name" value="Glycogen Phosphorylase B"/>
    <property type="match status" value="2"/>
</dbReference>
<dbReference type="InterPro" id="IPR001830">
    <property type="entry name" value="Glyco_trans_20"/>
</dbReference>
<dbReference type="InterPro" id="IPR012766">
    <property type="entry name" value="Trehalose_OtsA"/>
</dbReference>
<dbReference type="NCBIfam" id="NF007513">
    <property type="entry name" value="PRK10117.1"/>
    <property type="match status" value="1"/>
</dbReference>
<dbReference type="NCBIfam" id="TIGR02400">
    <property type="entry name" value="trehalose_OtsA"/>
    <property type="match status" value="1"/>
</dbReference>
<dbReference type="PANTHER" id="PTHR10788:SF106">
    <property type="entry name" value="BCDNA.GH08860"/>
    <property type="match status" value="1"/>
</dbReference>
<dbReference type="PANTHER" id="PTHR10788">
    <property type="entry name" value="TREHALOSE-6-PHOSPHATE SYNTHASE"/>
    <property type="match status" value="1"/>
</dbReference>
<dbReference type="Pfam" id="PF00982">
    <property type="entry name" value="Glyco_transf_20"/>
    <property type="match status" value="1"/>
</dbReference>
<dbReference type="SUPFAM" id="SSF53756">
    <property type="entry name" value="UDP-Glycosyltransferase/glycogen phosphorylase"/>
    <property type="match status" value="1"/>
</dbReference>
<sequence length="474" mass="53611">MSRLVVVSNRIAPPDEHAASAGGLAVGILGALKAAGGLWFGWSGETGNEDQPLKKVKKGNITWASFNLSEQDLDEYYNQFSNAVLWPAFHYRLDLVQFQRPAWDGYLRVNALLADKLLPLLQDDDIIWIHDYHLLPFAHELRKRGVNNRIGFFLHIPFPTPEIFNALPTYDTLLEQLCDYDLLGFQTENDRLAFLDCLSNLTRVTTRSAKSHTAWGKAFRTEVYPIGIEPKEIAKQAAGPLPPKLAQLKAELKNVQNIFSVERLDYSKGLPERFLAYEALLEKYPQHHGKIRYTQIAPTSRGDVQAYQDIRHQLENEAGRINGKYGQLGWTPLYYLNQHFDRKLLMKIFRYSDVGLVTPLRDGMNLVAKEYVAAQDPANPGVLVLSQFAGAANELTSALIVNPYDRDEVAAALDRALTMSLAERISRHAEMLDVIVKNDINHWQECFISDLKQIVPRSAESQQRDKVATFPKLA</sequence>
<protein>
    <recommendedName>
        <fullName evidence="1">Trehalose-6-phosphate synthase</fullName>
        <shortName evidence="1">TPS</shortName>
        <ecNumber evidence="1">2.4.1.15</ecNumber>
    </recommendedName>
    <alternativeName>
        <fullName evidence="1">Alpha,alpha-trehalose-phosphate synthase [UDP-forming]</fullName>
    </alternativeName>
    <alternativeName>
        <fullName evidence="1">Osmoregulatory trehalose synthesis protein A</fullName>
        <shortName evidence="1">OtsA</shortName>
    </alternativeName>
    <alternativeName>
        <fullName evidence="1">UDP-glucose-glucosephosphate glucosyltransferase</fullName>
    </alternativeName>
</protein>
<proteinExistence type="inferred from homology"/>
<gene>
    <name evidence="1" type="primary">otsA</name>
    <name type="ordered locus">SSON_1221</name>
</gene>
<name>OTSA_SHISS</name>
<accession>Q3Z2S4</accession>